<sequence length="67" mass="7962">MTSEMQLQAQIDVIEKENKELRRRNEELGQTVECQNKQIVTQNWRLLFFASSWIVYGIVSAIKYLWG</sequence>
<comment type="subcellular location">
    <subcellularLocation>
        <location evidence="2">Cell membrane</location>
        <topology evidence="2">Single-pass membrane protein</topology>
    </subcellularLocation>
</comment>
<reference key="1">
    <citation type="journal article" date="1997" name="Nature">
        <title>The complete genome sequence of the Gram-positive bacterium Bacillus subtilis.</title>
        <authorList>
            <person name="Kunst F."/>
            <person name="Ogasawara N."/>
            <person name="Moszer I."/>
            <person name="Albertini A.M."/>
            <person name="Alloni G."/>
            <person name="Azevedo V."/>
            <person name="Bertero M.G."/>
            <person name="Bessieres P."/>
            <person name="Bolotin A."/>
            <person name="Borchert S."/>
            <person name="Borriss R."/>
            <person name="Boursier L."/>
            <person name="Brans A."/>
            <person name="Braun M."/>
            <person name="Brignell S.C."/>
            <person name="Bron S."/>
            <person name="Brouillet S."/>
            <person name="Bruschi C.V."/>
            <person name="Caldwell B."/>
            <person name="Capuano V."/>
            <person name="Carter N.M."/>
            <person name="Choi S.-K."/>
            <person name="Codani J.-J."/>
            <person name="Connerton I.F."/>
            <person name="Cummings N.J."/>
            <person name="Daniel R.A."/>
            <person name="Denizot F."/>
            <person name="Devine K.M."/>
            <person name="Duesterhoeft A."/>
            <person name="Ehrlich S.D."/>
            <person name="Emmerson P.T."/>
            <person name="Entian K.-D."/>
            <person name="Errington J."/>
            <person name="Fabret C."/>
            <person name="Ferrari E."/>
            <person name="Foulger D."/>
            <person name="Fritz C."/>
            <person name="Fujita M."/>
            <person name="Fujita Y."/>
            <person name="Fuma S."/>
            <person name="Galizzi A."/>
            <person name="Galleron N."/>
            <person name="Ghim S.-Y."/>
            <person name="Glaser P."/>
            <person name="Goffeau A."/>
            <person name="Golightly E.J."/>
            <person name="Grandi G."/>
            <person name="Guiseppi G."/>
            <person name="Guy B.J."/>
            <person name="Haga K."/>
            <person name="Haiech J."/>
            <person name="Harwood C.R."/>
            <person name="Henaut A."/>
            <person name="Hilbert H."/>
            <person name="Holsappel S."/>
            <person name="Hosono S."/>
            <person name="Hullo M.-F."/>
            <person name="Itaya M."/>
            <person name="Jones L.-M."/>
            <person name="Joris B."/>
            <person name="Karamata D."/>
            <person name="Kasahara Y."/>
            <person name="Klaerr-Blanchard M."/>
            <person name="Klein C."/>
            <person name="Kobayashi Y."/>
            <person name="Koetter P."/>
            <person name="Koningstein G."/>
            <person name="Krogh S."/>
            <person name="Kumano M."/>
            <person name="Kurita K."/>
            <person name="Lapidus A."/>
            <person name="Lardinois S."/>
            <person name="Lauber J."/>
            <person name="Lazarevic V."/>
            <person name="Lee S.-M."/>
            <person name="Levine A."/>
            <person name="Liu H."/>
            <person name="Masuda S."/>
            <person name="Mauel C."/>
            <person name="Medigue C."/>
            <person name="Medina N."/>
            <person name="Mellado R.P."/>
            <person name="Mizuno M."/>
            <person name="Moestl D."/>
            <person name="Nakai S."/>
            <person name="Noback M."/>
            <person name="Noone D."/>
            <person name="O'Reilly M."/>
            <person name="Ogawa K."/>
            <person name="Ogiwara A."/>
            <person name="Oudega B."/>
            <person name="Park S.-H."/>
            <person name="Parro V."/>
            <person name="Pohl T.M."/>
            <person name="Portetelle D."/>
            <person name="Porwollik S."/>
            <person name="Prescott A.M."/>
            <person name="Presecan E."/>
            <person name="Pujic P."/>
            <person name="Purnelle B."/>
            <person name="Rapoport G."/>
            <person name="Rey M."/>
            <person name="Reynolds S."/>
            <person name="Rieger M."/>
            <person name="Rivolta C."/>
            <person name="Rocha E."/>
            <person name="Roche B."/>
            <person name="Rose M."/>
            <person name="Sadaie Y."/>
            <person name="Sato T."/>
            <person name="Scanlan E."/>
            <person name="Schleich S."/>
            <person name="Schroeter R."/>
            <person name="Scoffone F."/>
            <person name="Sekiguchi J."/>
            <person name="Sekowska A."/>
            <person name="Seror S.J."/>
            <person name="Serror P."/>
            <person name="Shin B.-S."/>
            <person name="Soldo B."/>
            <person name="Sorokin A."/>
            <person name="Tacconi E."/>
            <person name="Takagi T."/>
            <person name="Takahashi H."/>
            <person name="Takemaru K."/>
            <person name="Takeuchi M."/>
            <person name="Tamakoshi A."/>
            <person name="Tanaka T."/>
            <person name="Terpstra P."/>
            <person name="Tognoni A."/>
            <person name="Tosato V."/>
            <person name="Uchiyama S."/>
            <person name="Vandenbol M."/>
            <person name="Vannier F."/>
            <person name="Vassarotti A."/>
            <person name="Viari A."/>
            <person name="Wambutt R."/>
            <person name="Wedler E."/>
            <person name="Wedler H."/>
            <person name="Weitzenegger T."/>
            <person name="Winters P."/>
            <person name="Wipat A."/>
            <person name="Yamamoto H."/>
            <person name="Yamane K."/>
            <person name="Yasumoto K."/>
            <person name="Yata K."/>
            <person name="Yoshida K."/>
            <person name="Yoshikawa H.-F."/>
            <person name="Zumstein E."/>
            <person name="Yoshikawa H."/>
            <person name="Danchin A."/>
        </authorList>
    </citation>
    <scope>NUCLEOTIDE SEQUENCE [LARGE SCALE GENOMIC DNA]</scope>
    <source>
        <strain>168</strain>
    </source>
</reference>
<proteinExistence type="predicted"/>
<gene>
    <name type="primary">yopZ</name>
    <name type="ordered locus">BSU20710</name>
</gene>
<keyword id="KW-1003">Cell membrane</keyword>
<keyword id="KW-0175">Coiled coil</keyword>
<keyword id="KW-0472">Membrane</keyword>
<keyword id="KW-1185">Reference proteome</keyword>
<keyword id="KW-0812">Transmembrane</keyword>
<keyword id="KW-1133">Transmembrane helix</keyword>
<dbReference type="EMBL" id="AL009126">
    <property type="protein sequence ID" value="CAB13963.1"/>
    <property type="molecule type" value="Genomic_DNA"/>
</dbReference>
<dbReference type="RefSeq" id="NP_389953.1">
    <property type="nucleotide sequence ID" value="NC_000964.3"/>
</dbReference>
<dbReference type="RefSeq" id="WP_009967502.1">
    <property type="nucleotide sequence ID" value="NZ_OZ025638.1"/>
</dbReference>
<dbReference type="SMR" id="O34509"/>
<dbReference type="FunCoup" id="O34509">
    <property type="interactions" value="22"/>
</dbReference>
<dbReference type="IntAct" id="O34509">
    <property type="interactions" value="15"/>
</dbReference>
<dbReference type="STRING" id="224308.BSU20710"/>
<dbReference type="PaxDb" id="224308-BSU20710"/>
<dbReference type="EnsemblBacteria" id="CAB13963">
    <property type="protein sequence ID" value="CAB13963"/>
    <property type="gene ID" value="BSU_20710"/>
</dbReference>
<dbReference type="GeneID" id="936487"/>
<dbReference type="KEGG" id="bsu:BSU20710"/>
<dbReference type="PATRIC" id="fig|224308.179.peg.2261"/>
<dbReference type="InParanoid" id="O34509"/>
<dbReference type="OrthoDB" id="2933722at2"/>
<dbReference type="BioCyc" id="BSUB:BSU20710-MONOMER"/>
<dbReference type="Proteomes" id="UP000001570">
    <property type="component" value="Chromosome"/>
</dbReference>
<dbReference type="GO" id="GO:0005886">
    <property type="term" value="C:plasma membrane"/>
    <property type="evidence" value="ECO:0007669"/>
    <property type="project" value="UniProtKB-SubCell"/>
</dbReference>
<name>YOPZ_BACSU</name>
<evidence type="ECO:0000255" key="1"/>
<evidence type="ECO:0000305" key="2"/>
<organism>
    <name type="scientific">Bacillus subtilis (strain 168)</name>
    <dbReference type="NCBI Taxonomy" id="224308"/>
    <lineage>
        <taxon>Bacteria</taxon>
        <taxon>Bacillati</taxon>
        <taxon>Bacillota</taxon>
        <taxon>Bacilli</taxon>
        <taxon>Bacillales</taxon>
        <taxon>Bacillaceae</taxon>
        <taxon>Bacillus</taxon>
    </lineage>
</organism>
<feature type="chain" id="PRO_0000360172" description="SPbeta prophage-derived uncharacterized protein YopZ">
    <location>
        <begin position="1"/>
        <end position="67"/>
    </location>
</feature>
<feature type="transmembrane region" description="Helical" evidence="1">
    <location>
        <begin position="44"/>
        <end position="66"/>
    </location>
</feature>
<feature type="coiled-coil region" evidence="1">
    <location>
        <begin position="1"/>
        <end position="40"/>
    </location>
</feature>
<accession>O34509</accession>
<protein>
    <recommendedName>
        <fullName>SPbeta prophage-derived uncharacterized protein YopZ</fullName>
    </recommendedName>
</protein>